<gene>
    <name evidence="1" type="primary">pth</name>
    <name type="ordered locus">RB9922</name>
</gene>
<feature type="chain" id="PRO_0000187802" description="Peptidyl-tRNA hydrolase">
    <location>
        <begin position="1"/>
        <end position="190"/>
    </location>
</feature>
<feature type="active site" description="Proton acceptor" evidence="1">
    <location>
        <position position="19"/>
    </location>
</feature>
<feature type="binding site" evidence="1">
    <location>
        <position position="14"/>
    </location>
    <ligand>
        <name>tRNA</name>
        <dbReference type="ChEBI" id="CHEBI:17843"/>
    </ligand>
</feature>
<feature type="binding site" evidence="1">
    <location>
        <position position="64"/>
    </location>
    <ligand>
        <name>tRNA</name>
        <dbReference type="ChEBI" id="CHEBI:17843"/>
    </ligand>
</feature>
<feature type="binding site" evidence="1">
    <location>
        <position position="66"/>
    </location>
    <ligand>
        <name>tRNA</name>
        <dbReference type="ChEBI" id="CHEBI:17843"/>
    </ligand>
</feature>
<feature type="site" description="Discriminates between blocked and unblocked aminoacyl-tRNA" evidence="1">
    <location>
        <position position="9"/>
    </location>
</feature>
<feature type="site" description="Stabilizes the basic form of H active site to accept a proton" evidence="1">
    <location>
        <position position="91"/>
    </location>
</feature>
<organism>
    <name type="scientific">Rhodopirellula baltica (strain DSM 10527 / NCIMB 13988 / SH1)</name>
    <dbReference type="NCBI Taxonomy" id="243090"/>
    <lineage>
        <taxon>Bacteria</taxon>
        <taxon>Pseudomonadati</taxon>
        <taxon>Planctomycetota</taxon>
        <taxon>Planctomycetia</taxon>
        <taxon>Pirellulales</taxon>
        <taxon>Pirellulaceae</taxon>
        <taxon>Rhodopirellula</taxon>
    </lineage>
</organism>
<name>PTH_RHOBA</name>
<keyword id="KW-0963">Cytoplasm</keyword>
<keyword id="KW-0378">Hydrolase</keyword>
<keyword id="KW-1185">Reference proteome</keyword>
<keyword id="KW-0694">RNA-binding</keyword>
<keyword id="KW-0820">tRNA-binding</keyword>
<reference key="1">
    <citation type="journal article" date="2003" name="Proc. Natl. Acad. Sci. U.S.A.">
        <title>Complete genome sequence of the marine planctomycete Pirellula sp. strain 1.</title>
        <authorList>
            <person name="Gloeckner F.O."/>
            <person name="Kube M."/>
            <person name="Bauer M."/>
            <person name="Teeling H."/>
            <person name="Lombardot T."/>
            <person name="Ludwig W."/>
            <person name="Gade D."/>
            <person name="Beck A."/>
            <person name="Borzym K."/>
            <person name="Heitmann K."/>
            <person name="Rabus R."/>
            <person name="Schlesner H."/>
            <person name="Amann R."/>
            <person name="Reinhardt R."/>
        </authorList>
    </citation>
    <scope>NUCLEOTIDE SEQUENCE [LARGE SCALE GENOMIC DNA]</scope>
    <source>
        <strain>DSM 10527 / NCIMB 13988 / SH1</strain>
    </source>
</reference>
<sequence>MKLVVGLGNPGRKYDQTRHNIGFMVADALVRRYVGSPPTTKFEGEISECRIENEKVLVLCPQTYMNASGQSVRKAMDFYKLSPEDILVICDDLNLETGRVRLRRSGSAGGQKGLVDIIRHLGSEQWARLKIGIGRPPAKWQVSDYVLGKFDKTELEEMEHAIVHSCDATACWVADGVTEAMNRYNAASGT</sequence>
<comment type="function">
    <text evidence="1">Hydrolyzes ribosome-free peptidyl-tRNAs (with 1 or more amino acids incorporated), which drop off the ribosome during protein synthesis, or as a result of ribosome stalling.</text>
</comment>
<comment type="function">
    <text evidence="1">Catalyzes the release of premature peptidyl moieties from peptidyl-tRNA molecules trapped in stalled 50S ribosomal subunits, and thus maintains levels of free tRNAs and 50S ribosomes.</text>
</comment>
<comment type="catalytic activity">
    <reaction evidence="1">
        <text>an N-acyl-L-alpha-aminoacyl-tRNA + H2O = an N-acyl-L-amino acid + a tRNA + H(+)</text>
        <dbReference type="Rhea" id="RHEA:54448"/>
        <dbReference type="Rhea" id="RHEA-COMP:10123"/>
        <dbReference type="Rhea" id="RHEA-COMP:13883"/>
        <dbReference type="ChEBI" id="CHEBI:15377"/>
        <dbReference type="ChEBI" id="CHEBI:15378"/>
        <dbReference type="ChEBI" id="CHEBI:59874"/>
        <dbReference type="ChEBI" id="CHEBI:78442"/>
        <dbReference type="ChEBI" id="CHEBI:138191"/>
        <dbReference type="EC" id="3.1.1.29"/>
    </reaction>
</comment>
<comment type="subunit">
    <text evidence="1">Monomer.</text>
</comment>
<comment type="subcellular location">
    <subcellularLocation>
        <location evidence="1">Cytoplasm</location>
    </subcellularLocation>
</comment>
<comment type="similarity">
    <text evidence="1">Belongs to the PTH family.</text>
</comment>
<dbReference type="EC" id="3.1.1.29" evidence="1"/>
<dbReference type="EMBL" id="BX294150">
    <property type="protein sequence ID" value="CAD76532.1"/>
    <property type="molecule type" value="Genomic_DNA"/>
</dbReference>
<dbReference type="RefSeq" id="NP_869146.1">
    <property type="nucleotide sequence ID" value="NC_005027.1"/>
</dbReference>
<dbReference type="RefSeq" id="WP_011122535.1">
    <property type="nucleotide sequence ID" value="NC_005027.1"/>
</dbReference>
<dbReference type="SMR" id="Q7UKV0"/>
<dbReference type="FunCoup" id="Q7UKV0">
    <property type="interactions" value="370"/>
</dbReference>
<dbReference type="STRING" id="243090.RB9922"/>
<dbReference type="EnsemblBacteria" id="CAD76532">
    <property type="protein sequence ID" value="CAD76532"/>
    <property type="gene ID" value="RB9922"/>
</dbReference>
<dbReference type="KEGG" id="rba:RB9922"/>
<dbReference type="PATRIC" id="fig|243090.15.peg.4776"/>
<dbReference type="eggNOG" id="COG0193">
    <property type="taxonomic scope" value="Bacteria"/>
</dbReference>
<dbReference type="HOGENOM" id="CLU_062456_4_1_0"/>
<dbReference type="InParanoid" id="Q7UKV0"/>
<dbReference type="OrthoDB" id="9800507at2"/>
<dbReference type="Proteomes" id="UP000001025">
    <property type="component" value="Chromosome"/>
</dbReference>
<dbReference type="GO" id="GO:0005737">
    <property type="term" value="C:cytoplasm"/>
    <property type="evidence" value="ECO:0007669"/>
    <property type="project" value="UniProtKB-SubCell"/>
</dbReference>
<dbReference type="GO" id="GO:0004045">
    <property type="term" value="F:peptidyl-tRNA hydrolase activity"/>
    <property type="evidence" value="ECO:0000318"/>
    <property type="project" value="GO_Central"/>
</dbReference>
<dbReference type="GO" id="GO:0000049">
    <property type="term" value="F:tRNA binding"/>
    <property type="evidence" value="ECO:0007669"/>
    <property type="project" value="UniProtKB-UniRule"/>
</dbReference>
<dbReference type="GO" id="GO:0006515">
    <property type="term" value="P:protein quality control for misfolded or incompletely synthesized proteins"/>
    <property type="evidence" value="ECO:0007669"/>
    <property type="project" value="UniProtKB-UniRule"/>
</dbReference>
<dbReference type="GO" id="GO:0072344">
    <property type="term" value="P:rescue of stalled ribosome"/>
    <property type="evidence" value="ECO:0007669"/>
    <property type="project" value="UniProtKB-UniRule"/>
</dbReference>
<dbReference type="CDD" id="cd00462">
    <property type="entry name" value="PTH"/>
    <property type="match status" value="1"/>
</dbReference>
<dbReference type="FunFam" id="3.40.50.1470:FF:000001">
    <property type="entry name" value="Peptidyl-tRNA hydrolase"/>
    <property type="match status" value="1"/>
</dbReference>
<dbReference type="Gene3D" id="3.40.50.1470">
    <property type="entry name" value="Peptidyl-tRNA hydrolase"/>
    <property type="match status" value="1"/>
</dbReference>
<dbReference type="HAMAP" id="MF_00083">
    <property type="entry name" value="Pept_tRNA_hydro_bact"/>
    <property type="match status" value="1"/>
</dbReference>
<dbReference type="InterPro" id="IPR001328">
    <property type="entry name" value="Pept_tRNA_hydro"/>
</dbReference>
<dbReference type="InterPro" id="IPR018171">
    <property type="entry name" value="Pept_tRNA_hydro_CS"/>
</dbReference>
<dbReference type="InterPro" id="IPR036416">
    <property type="entry name" value="Pept_tRNA_hydro_sf"/>
</dbReference>
<dbReference type="NCBIfam" id="TIGR00447">
    <property type="entry name" value="pth"/>
    <property type="match status" value="1"/>
</dbReference>
<dbReference type="PANTHER" id="PTHR17224">
    <property type="entry name" value="PEPTIDYL-TRNA HYDROLASE"/>
    <property type="match status" value="1"/>
</dbReference>
<dbReference type="PANTHER" id="PTHR17224:SF1">
    <property type="entry name" value="PEPTIDYL-TRNA HYDROLASE"/>
    <property type="match status" value="1"/>
</dbReference>
<dbReference type="Pfam" id="PF01195">
    <property type="entry name" value="Pept_tRNA_hydro"/>
    <property type="match status" value="1"/>
</dbReference>
<dbReference type="SUPFAM" id="SSF53178">
    <property type="entry name" value="Peptidyl-tRNA hydrolase-like"/>
    <property type="match status" value="1"/>
</dbReference>
<dbReference type="PROSITE" id="PS01195">
    <property type="entry name" value="PEPT_TRNA_HYDROL_1"/>
    <property type="match status" value="1"/>
</dbReference>
<accession>Q7UKV0</accession>
<proteinExistence type="inferred from homology"/>
<evidence type="ECO:0000255" key="1">
    <source>
        <dbReference type="HAMAP-Rule" id="MF_00083"/>
    </source>
</evidence>
<protein>
    <recommendedName>
        <fullName evidence="1">Peptidyl-tRNA hydrolase</fullName>
        <shortName evidence="1">Pth</shortName>
        <ecNumber evidence="1">3.1.1.29</ecNumber>
    </recommendedName>
</protein>